<reference key="1">
    <citation type="journal article" date="2006" name="BMC Genomics">
        <title>Complete genome sequence of Shigella flexneri 5b and comparison with Shigella flexneri 2a.</title>
        <authorList>
            <person name="Nie H."/>
            <person name="Yang F."/>
            <person name="Zhang X."/>
            <person name="Yang J."/>
            <person name="Chen L."/>
            <person name="Wang J."/>
            <person name="Xiong Z."/>
            <person name="Peng J."/>
            <person name="Sun L."/>
            <person name="Dong J."/>
            <person name="Xue Y."/>
            <person name="Xu X."/>
            <person name="Chen S."/>
            <person name="Yao Z."/>
            <person name="Shen Y."/>
            <person name="Jin Q."/>
        </authorList>
    </citation>
    <scope>NUCLEOTIDE SEQUENCE [LARGE SCALE GENOMIC DNA]</scope>
    <source>
        <strain>8401</strain>
    </source>
</reference>
<name>EMTA_SHIF8</name>
<accession>Q0T5K7</accession>
<proteinExistence type="inferred from homology"/>
<keyword id="KW-0998">Cell outer membrane</keyword>
<keyword id="KW-0961">Cell wall biogenesis/degradation</keyword>
<keyword id="KW-0449">Lipoprotein</keyword>
<keyword id="KW-0456">Lyase</keyword>
<keyword id="KW-0472">Membrane</keyword>
<keyword id="KW-0564">Palmitate</keyword>
<keyword id="KW-0732">Signal</keyword>
<comment type="function">
    <text evidence="1">Murein-degrading enzyme. May play a role in recycling of muropeptides during cell elongation and/or cell division. Preferentially cleaves at a distance of more than two disaccharide units from the ends of the glycan chain.</text>
</comment>
<comment type="catalytic activity">
    <reaction evidence="1">
        <text>Endolytic cleavage of the (1-&gt;4)-beta-glycosidic linkage between N-acetylmuramic acid (MurNAc) and N-acetylglucosamine (GlcNAc) residues in peptidoglycan with concomitant formation of a 1,6-anhydrobond in the MurNAc residue.</text>
        <dbReference type="EC" id="4.2.2.n2"/>
    </reaction>
</comment>
<comment type="subcellular location">
    <subcellularLocation>
        <location evidence="1">Cell outer membrane</location>
        <topology evidence="1">Lipid-anchor</topology>
    </subcellularLocation>
</comment>
<comment type="similarity">
    <text evidence="1">Belongs to the transglycosylase Slt family.</text>
</comment>
<comment type="sequence caution" evidence="2">
    <conflict type="erroneous initiation">
        <sequence resource="EMBL-CDS" id="ABF03407"/>
    </conflict>
</comment>
<sequence length="203" mass="22213">MKLRWFAFLIVLLAGCSSKHDYTNPPWNAKVPVQRAMQWMPISQKAGAAWGVDPQLITAIIAIESGGNPNAVSKSNAIGLMQLKASTSGRDVYRRMGWSGEPTTSELKNPERNISMGAAYLNILETGPLAGIEDPKVLQYALVVSYANGAGALLRTFSSDRKKAISKINDLDADEFLDHVARNHPAPQAPRYIYKLEQALDAM</sequence>
<evidence type="ECO:0000255" key="1">
    <source>
        <dbReference type="HAMAP-Rule" id="MF_01381"/>
    </source>
</evidence>
<evidence type="ECO:0000305" key="2"/>
<feature type="signal peptide" evidence="1">
    <location>
        <begin position="1"/>
        <end position="15"/>
    </location>
</feature>
<feature type="chain" id="PRO_0000312918" description="Endo-type membrane-bound lytic murein transglycosylase A">
    <location>
        <begin position="16"/>
        <end position="203"/>
    </location>
</feature>
<feature type="lipid moiety-binding region" description="N-palmitoyl cysteine" evidence="1">
    <location>
        <position position="16"/>
    </location>
</feature>
<feature type="lipid moiety-binding region" description="S-diacylglycerol cysteine" evidence="1">
    <location>
        <position position="16"/>
    </location>
</feature>
<gene>
    <name evidence="1" type="primary">emtA</name>
    <name type="synonym">mltE</name>
    <name type="ordered locus">SFV_1200</name>
</gene>
<organism>
    <name type="scientific">Shigella flexneri serotype 5b (strain 8401)</name>
    <dbReference type="NCBI Taxonomy" id="373384"/>
    <lineage>
        <taxon>Bacteria</taxon>
        <taxon>Pseudomonadati</taxon>
        <taxon>Pseudomonadota</taxon>
        <taxon>Gammaproteobacteria</taxon>
        <taxon>Enterobacterales</taxon>
        <taxon>Enterobacteriaceae</taxon>
        <taxon>Shigella</taxon>
    </lineage>
</organism>
<protein>
    <recommendedName>
        <fullName evidence="1">Endo-type membrane-bound lytic murein transglycosylase A</fullName>
        <ecNumber evidence="1">4.2.2.n2</ecNumber>
    </recommendedName>
    <alternativeName>
        <fullName evidence="1">Peptidoglycan lytic endotransglycosylase</fullName>
    </alternativeName>
</protein>
<dbReference type="EC" id="4.2.2.n2" evidence="1"/>
<dbReference type="EMBL" id="CP000266">
    <property type="protein sequence ID" value="ABF03407.1"/>
    <property type="status" value="ALT_INIT"/>
    <property type="molecule type" value="Genomic_DNA"/>
</dbReference>
<dbReference type="RefSeq" id="WP_001295616.1">
    <property type="nucleotide sequence ID" value="NC_008258.1"/>
</dbReference>
<dbReference type="SMR" id="Q0T5K7"/>
<dbReference type="CAZy" id="GH23">
    <property type="family name" value="Glycoside Hydrolase Family 23"/>
</dbReference>
<dbReference type="GeneID" id="75171299"/>
<dbReference type="KEGG" id="sfv:SFV_1200"/>
<dbReference type="HOGENOM" id="CLU_103257_0_0_6"/>
<dbReference type="Proteomes" id="UP000000659">
    <property type="component" value="Chromosome"/>
</dbReference>
<dbReference type="GO" id="GO:0009279">
    <property type="term" value="C:cell outer membrane"/>
    <property type="evidence" value="ECO:0007669"/>
    <property type="project" value="UniProtKB-SubCell"/>
</dbReference>
<dbReference type="GO" id="GO:0008932">
    <property type="term" value="F:lytic endotransglycosylase activity"/>
    <property type="evidence" value="ECO:0007669"/>
    <property type="project" value="InterPro"/>
</dbReference>
<dbReference type="GO" id="GO:0016998">
    <property type="term" value="P:cell wall macromolecule catabolic process"/>
    <property type="evidence" value="ECO:0007669"/>
    <property type="project" value="UniProtKB-UniRule"/>
</dbReference>
<dbReference type="GO" id="GO:0071555">
    <property type="term" value="P:cell wall organization"/>
    <property type="evidence" value="ECO:0007669"/>
    <property type="project" value="UniProtKB-KW"/>
</dbReference>
<dbReference type="GO" id="GO:0000270">
    <property type="term" value="P:peptidoglycan metabolic process"/>
    <property type="evidence" value="ECO:0007669"/>
    <property type="project" value="InterPro"/>
</dbReference>
<dbReference type="CDD" id="cd16893">
    <property type="entry name" value="LT_MltC_MltE"/>
    <property type="match status" value="1"/>
</dbReference>
<dbReference type="FunFam" id="1.10.530.10:FF:000007">
    <property type="entry name" value="Endo-type membrane-bound lytic murein transglycosylase A"/>
    <property type="match status" value="1"/>
</dbReference>
<dbReference type="Gene3D" id="1.10.530.10">
    <property type="match status" value="1"/>
</dbReference>
<dbReference type="HAMAP" id="MF_01381">
    <property type="entry name" value="EmtA"/>
    <property type="match status" value="1"/>
</dbReference>
<dbReference type="InterPro" id="IPR023946">
    <property type="entry name" value="EmtA"/>
</dbReference>
<dbReference type="InterPro" id="IPR023346">
    <property type="entry name" value="Lysozyme-like_dom_sf"/>
</dbReference>
<dbReference type="InterPro" id="IPR000189">
    <property type="entry name" value="Transglyc_AS"/>
</dbReference>
<dbReference type="InterPro" id="IPR008258">
    <property type="entry name" value="Transglycosylase_SLT_dom_1"/>
</dbReference>
<dbReference type="NCBIfam" id="NF012014">
    <property type="entry name" value="PRK15470.1"/>
    <property type="match status" value="1"/>
</dbReference>
<dbReference type="PANTHER" id="PTHR37423:SF4">
    <property type="entry name" value="ENDO-TYPE MEMBRANE-BOUND LYTIC MUREIN TRANSGLYCOSYLASE A"/>
    <property type="match status" value="1"/>
</dbReference>
<dbReference type="PANTHER" id="PTHR37423">
    <property type="entry name" value="SOLUBLE LYTIC MUREIN TRANSGLYCOSYLASE-RELATED"/>
    <property type="match status" value="1"/>
</dbReference>
<dbReference type="Pfam" id="PF01464">
    <property type="entry name" value="SLT"/>
    <property type="match status" value="1"/>
</dbReference>
<dbReference type="SUPFAM" id="SSF53955">
    <property type="entry name" value="Lysozyme-like"/>
    <property type="match status" value="1"/>
</dbReference>
<dbReference type="PROSITE" id="PS51257">
    <property type="entry name" value="PROKAR_LIPOPROTEIN"/>
    <property type="match status" value="1"/>
</dbReference>
<dbReference type="PROSITE" id="PS00922">
    <property type="entry name" value="TRANSGLYCOSYLASE"/>
    <property type="match status" value="1"/>
</dbReference>